<evidence type="ECO:0000250" key="1">
    <source>
        <dbReference type="UniProtKB" id="Q4G148"/>
    </source>
</evidence>
<evidence type="ECO:0000255" key="2"/>
<evidence type="ECO:0000303" key="3">
    <source>
    </source>
</evidence>
<evidence type="ECO:0000305" key="4"/>
<sequence length="404" mass="46491">MRRYLRVVGLCLACGFCSLLYAFSQLAVSLEEGAAGGRRPQAAVVSWLADGGRGTGRGAGSAGPGRTGRYDMKTRPDEKMHLAVVACGERLEETVTMLKSALIFSIKPLHVHIFAEDQLHDSFKDRLASWSFLRRFDYSLYPITFPGDSAADWKKLFKPCASQRLFLPLILKEVDSLLYVDTDILFLRPVDDIWSLLKKFNSTQIAAMAPEHEEPRIGWYNRFARHPYYGRTGVNSGVMLMNMTRMRRKYFKNDMTTARLQWGDILMPLLKKYKLNITWGDQDLLNIVFSHNPESLFVFPCQWNYRPDHCIYGSNCREAEEEGVFILHGNRGVYHDDKQPAFRAVYEALRNCSLEDDSVRSLLKPLELELQKTVHTYCGKTYKIFIKQLTKSIRNRYDTPPKER</sequence>
<organism>
    <name type="scientific">Mus musculus</name>
    <name type="common">Mouse</name>
    <dbReference type="NCBI Taxonomy" id="10090"/>
    <lineage>
        <taxon>Eukaryota</taxon>
        <taxon>Metazoa</taxon>
        <taxon>Chordata</taxon>
        <taxon>Craniata</taxon>
        <taxon>Vertebrata</taxon>
        <taxon>Euteleostomi</taxon>
        <taxon>Mammalia</taxon>
        <taxon>Eutheria</taxon>
        <taxon>Euarchontoglires</taxon>
        <taxon>Glires</taxon>
        <taxon>Rodentia</taxon>
        <taxon>Myomorpha</taxon>
        <taxon>Muroidea</taxon>
        <taxon>Muridae</taxon>
        <taxon>Murinae</taxon>
        <taxon>Mus</taxon>
        <taxon>Mus</taxon>
    </lineage>
</organism>
<feature type="chain" id="PRO_0000288535" description="Glucoside xylosyltransferase 1">
    <location>
        <begin position="1"/>
        <end position="404"/>
    </location>
</feature>
<feature type="topological domain" description="Cytoplasmic" evidence="2">
    <location>
        <begin position="1"/>
        <end position="6"/>
    </location>
</feature>
<feature type="transmembrane region" description="Helical; Signal-anchor for type II membrane protein" evidence="2">
    <location>
        <begin position="7"/>
        <end position="29"/>
    </location>
</feature>
<feature type="topological domain" description="Lumenal" evidence="2">
    <location>
        <begin position="30"/>
        <end position="404"/>
    </location>
</feature>
<feature type="glycosylation site" description="N-linked (GlcNAc...) asparagine" evidence="2">
    <location>
        <position position="201"/>
    </location>
</feature>
<feature type="splice variant" id="VSP_025710" description="In isoform 2." evidence="3">
    <original>SLEDDSVRSLLKPLELELQKTVHTYCGKTYKIFIKQLTKSIRNRYDTPPKER</original>
    <variation>WCLTASAVSLRGFRGWSGTD</variation>
    <location>
        <begin position="353"/>
        <end position="404"/>
    </location>
</feature>
<gene>
    <name type="primary">Gxylt1</name>
    <name type="synonym">Glt8d3</name>
    <name type="synonym">Gm87</name>
</gene>
<dbReference type="EC" id="2.4.2.42" evidence="1"/>
<dbReference type="EMBL" id="AK147387">
    <property type="protein sequence ID" value="BAE27879.1"/>
    <property type="molecule type" value="mRNA"/>
</dbReference>
<dbReference type="EMBL" id="AC127360">
    <property type="status" value="NOT_ANNOTATED_CDS"/>
    <property type="molecule type" value="Genomic_DNA"/>
</dbReference>
<dbReference type="EMBL" id="CH466550">
    <property type="protein sequence ID" value="EDL04286.1"/>
    <property type="molecule type" value="Genomic_DNA"/>
</dbReference>
<dbReference type="EMBL" id="BC141302">
    <property type="protein sequence ID" value="AAI41303.1"/>
    <property type="molecule type" value="mRNA"/>
</dbReference>
<dbReference type="EMBL" id="BC171972">
    <property type="protein sequence ID" value="AAI71972.1"/>
    <property type="molecule type" value="mRNA"/>
</dbReference>
<dbReference type="CCDS" id="CCDS27764.1">
    <molecule id="Q3UHH8-2"/>
</dbReference>
<dbReference type="CCDS" id="CCDS88828.1">
    <molecule id="Q3UHH8-1"/>
</dbReference>
<dbReference type="RefSeq" id="NP_001028447.1">
    <molecule id="Q3UHH8-2"/>
    <property type="nucleotide sequence ID" value="NM_001033275.5"/>
</dbReference>
<dbReference type="RefSeq" id="NP_001343935.1">
    <molecule id="Q3UHH8-1"/>
    <property type="nucleotide sequence ID" value="NM_001357006.1"/>
</dbReference>
<dbReference type="RefSeq" id="XP_006520912.1">
    <property type="nucleotide sequence ID" value="XM_006520849.1"/>
</dbReference>
<dbReference type="SMR" id="Q3UHH8"/>
<dbReference type="FunCoup" id="Q3UHH8">
    <property type="interactions" value="579"/>
</dbReference>
<dbReference type="STRING" id="10090.ENSMUSP00000081947"/>
<dbReference type="CAZy" id="GT8">
    <property type="family name" value="Glycosyltransferase Family 8"/>
</dbReference>
<dbReference type="GlyConnect" id="2338">
    <property type="glycosylation" value="2 N-Linked glycans (1 site)"/>
</dbReference>
<dbReference type="GlyCosmos" id="Q3UHH8">
    <property type="glycosylation" value="2 sites, 2 glycans"/>
</dbReference>
<dbReference type="GlyGen" id="Q3UHH8">
    <property type="glycosylation" value="3 sites, 5 N-linked glycans (3 sites)"/>
</dbReference>
<dbReference type="iPTMnet" id="Q3UHH8"/>
<dbReference type="PhosphoSitePlus" id="Q3UHH8"/>
<dbReference type="SwissPalm" id="Q3UHH8"/>
<dbReference type="PaxDb" id="10090-ENSMUSP00000047281"/>
<dbReference type="ProteomicsDB" id="271370">
    <molecule id="Q3UHH8-1"/>
</dbReference>
<dbReference type="ProteomicsDB" id="271371">
    <molecule id="Q3UHH8-2"/>
</dbReference>
<dbReference type="Pumba" id="Q3UHH8"/>
<dbReference type="Antibodypedia" id="66044">
    <property type="antibodies" value="67 antibodies from 12 providers"/>
</dbReference>
<dbReference type="Ensembl" id="ENSMUST00000049484.13">
    <molecule id="Q3UHH8-2"/>
    <property type="protein sequence ID" value="ENSMUSP00000047281.7"/>
    <property type="gene ID" value="ENSMUSG00000036197.17"/>
</dbReference>
<dbReference type="Ensembl" id="ENSMUST00000230063.2">
    <molecule id="Q3UHH8-1"/>
    <property type="protein sequence ID" value="ENSMUSP00000155854.2"/>
    <property type="gene ID" value="ENSMUSG00000036197.17"/>
</dbReference>
<dbReference type="GeneID" id="223827"/>
<dbReference type="KEGG" id="mmu:223827"/>
<dbReference type="UCSC" id="uc007xiq.1">
    <molecule id="Q3UHH8-2"/>
    <property type="organism name" value="mouse"/>
</dbReference>
<dbReference type="UCSC" id="uc011zyf.1">
    <molecule id="Q3UHH8-1"/>
    <property type="organism name" value="mouse"/>
</dbReference>
<dbReference type="AGR" id="MGI:2684933"/>
<dbReference type="CTD" id="283464"/>
<dbReference type="MGI" id="MGI:2684933">
    <property type="gene designation" value="Gxylt1"/>
</dbReference>
<dbReference type="VEuPathDB" id="HostDB:ENSMUSG00000036197"/>
<dbReference type="eggNOG" id="KOG3765">
    <property type="taxonomic scope" value="Eukaryota"/>
</dbReference>
<dbReference type="GeneTree" id="ENSGT00940000156242"/>
<dbReference type="HOGENOM" id="CLU_040965_0_0_1"/>
<dbReference type="InParanoid" id="Q3UHH8"/>
<dbReference type="OrthoDB" id="6238971at2759"/>
<dbReference type="PhylomeDB" id="Q3UHH8"/>
<dbReference type="TreeFam" id="TF323210"/>
<dbReference type="BioGRID-ORCS" id="223827">
    <property type="hits" value="3 hits in 60 CRISPR screens"/>
</dbReference>
<dbReference type="PRO" id="PR:Q3UHH8"/>
<dbReference type="Proteomes" id="UP000000589">
    <property type="component" value="Chromosome 15"/>
</dbReference>
<dbReference type="RNAct" id="Q3UHH8">
    <property type="molecule type" value="protein"/>
</dbReference>
<dbReference type="Bgee" id="ENSMUSG00000036197">
    <property type="expression patterns" value="Expressed in secondary oocyte and 207 other cell types or tissues"/>
</dbReference>
<dbReference type="ExpressionAtlas" id="Q3UHH8">
    <property type="expression patterns" value="baseline and differential"/>
</dbReference>
<dbReference type="GO" id="GO:0016020">
    <property type="term" value="C:membrane"/>
    <property type="evidence" value="ECO:0007669"/>
    <property type="project" value="UniProtKB-SubCell"/>
</dbReference>
<dbReference type="GO" id="GO:0140563">
    <property type="term" value="F:UDP-D-xylose:beta-D-glucoside alpha-1,3-D-xylosyltransferase activity"/>
    <property type="evidence" value="ECO:0007669"/>
    <property type="project" value="UniProtKB-EC"/>
</dbReference>
<dbReference type="GO" id="GO:0035252">
    <property type="term" value="F:UDP-xylosyltransferase activity"/>
    <property type="evidence" value="ECO:0000250"/>
    <property type="project" value="UniProtKB"/>
</dbReference>
<dbReference type="GO" id="GO:0016266">
    <property type="term" value="P:O-glycan processing"/>
    <property type="evidence" value="ECO:0000250"/>
    <property type="project" value="UniProtKB"/>
</dbReference>
<dbReference type="CDD" id="cd06430">
    <property type="entry name" value="GT8_like_2"/>
    <property type="match status" value="1"/>
</dbReference>
<dbReference type="FunFam" id="3.90.550.10:FF:000042">
    <property type="entry name" value="Glucoside xylosyltransferase 1"/>
    <property type="match status" value="1"/>
</dbReference>
<dbReference type="Gene3D" id="3.90.550.10">
    <property type="entry name" value="Spore Coat Polysaccharide Biosynthesis Protein SpsA, Chain A"/>
    <property type="match status" value="1"/>
</dbReference>
<dbReference type="InterPro" id="IPR002495">
    <property type="entry name" value="Glyco_trans_8"/>
</dbReference>
<dbReference type="InterPro" id="IPR051993">
    <property type="entry name" value="Glycosyltransferase_8"/>
</dbReference>
<dbReference type="InterPro" id="IPR029044">
    <property type="entry name" value="Nucleotide-diphossugar_trans"/>
</dbReference>
<dbReference type="PANTHER" id="PTHR46012:SF3">
    <property type="entry name" value="GLUCOSIDE XYLOSYLTRANSFERASE 1"/>
    <property type="match status" value="1"/>
</dbReference>
<dbReference type="PANTHER" id="PTHR46012">
    <property type="entry name" value="IP22168P"/>
    <property type="match status" value="1"/>
</dbReference>
<dbReference type="Pfam" id="PF01501">
    <property type="entry name" value="Glyco_transf_8"/>
    <property type="match status" value="1"/>
</dbReference>
<dbReference type="SUPFAM" id="SSF53448">
    <property type="entry name" value="Nucleotide-diphospho-sugar transferases"/>
    <property type="match status" value="1"/>
</dbReference>
<proteinExistence type="evidence at protein level"/>
<comment type="function">
    <text evidence="1">Glycosyltransferase which elongates the O-linked glucose attached to EGF-like repeats in the extracellular domain of Notch proteins by catalyzing the addition of xylose.</text>
</comment>
<comment type="catalytic activity">
    <reaction evidence="1">
        <text>3-O-(beta-D-glucosyl)-L-seryl-[EGF-like domain protein] + UDP-alpha-D-xylose = 3-O-[alpha-D-xylosyl-(1-&gt;3)-beta-D-glucosyl]-L-seryl-[EGF-like domain protein] + UDP + H(+)</text>
        <dbReference type="Rhea" id="RHEA:56064"/>
        <dbReference type="Rhea" id="RHEA-COMP:14610"/>
        <dbReference type="Rhea" id="RHEA-COMP:14611"/>
        <dbReference type="ChEBI" id="CHEBI:15378"/>
        <dbReference type="ChEBI" id="CHEBI:57632"/>
        <dbReference type="ChEBI" id="CHEBI:58223"/>
        <dbReference type="ChEBI" id="CHEBI:140575"/>
        <dbReference type="ChEBI" id="CHEBI:140576"/>
        <dbReference type="EC" id="2.4.2.42"/>
    </reaction>
</comment>
<comment type="subcellular location">
    <subcellularLocation>
        <location evidence="4">Membrane</location>
        <topology evidence="4">Single-pass type II membrane protein</topology>
    </subcellularLocation>
</comment>
<comment type="alternative products">
    <event type="alternative splicing"/>
    <isoform>
        <id>Q3UHH8-1</id>
        <name>1</name>
        <sequence type="displayed"/>
    </isoform>
    <isoform>
        <id>Q3UHH8-2</id>
        <name>2</name>
        <sequence type="described" ref="VSP_025710"/>
    </isoform>
</comment>
<comment type="similarity">
    <text evidence="4">Belongs to the glycosyltransferase 8 family.</text>
</comment>
<name>GXLT1_MOUSE</name>
<keyword id="KW-0025">Alternative splicing</keyword>
<keyword id="KW-0325">Glycoprotein</keyword>
<keyword id="KW-0328">Glycosyltransferase</keyword>
<keyword id="KW-0472">Membrane</keyword>
<keyword id="KW-1185">Reference proteome</keyword>
<keyword id="KW-0735">Signal-anchor</keyword>
<keyword id="KW-0808">Transferase</keyword>
<keyword id="KW-0812">Transmembrane</keyword>
<keyword id="KW-1133">Transmembrane helix</keyword>
<reference key="1">
    <citation type="journal article" date="2005" name="Science">
        <title>The transcriptional landscape of the mammalian genome.</title>
        <authorList>
            <person name="Carninci P."/>
            <person name="Kasukawa T."/>
            <person name="Katayama S."/>
            <person name="Gough J."/>
            <person name="Frith M.C."/>
            <person name="Maeda N."/>
            <person name="Oyama R."/>
            <person name="Ravasi T."/>
            <person name="Lenhard B."/>
            <person name="Wells C."/>
            <person name="Kodzius R."/>
            <person name="Shimokawa K."/>
            <person name="Bajic V.B."/>
            <person name="Brenner S.E."/>
            <person name="Batalov S."/>
            <person name="Forrest A.R."/>
            <person name="Zavolan M."/>
            <person name="Davis M.J."/>
            <person name="Wilming L.G."/>
            <person name="Aidinis V."/>
            <person name="Allen J.E."/>
            <person name="Ambesi-Impiombato A."/>
            <person name="Apweiler R."/>
            <person name="Aturaliya R.N."/>
            <person name="Bailey T.L."/>
            <person name="Bansal M."/>
            <person name="Baxter L."/>
            <person name="Beisel K.W."/>
            <person name="Bersano T."/>
            <person name="Bono H."/>
            <person name="Chalk A.M."/>
            <person name="Chiu K.P."/>
            <person name="Choudhary V."/>
            <person name="Christoffels A."/>
            <person name="Clutterbuck D.R."/>
            <person name="Crowe M.L."/>
            <person name="Dalla E."/>
            <person name="Dalrymple B.P."/>
            <person name="de Bono B."/>
            <person name="Della Gatta G."/>
            <person name="di Bernardo D."/>
            <person name="Down T."/>
            <person name="Engstrom P."/>
            <person name="Fagiolini M."/>
            <person name="Faulkner G."/>
            <person name="Fletcher C.F."/>
            <person name="Fukushima T."/>
            <person name="Furuno M."/>
            <person name="Futaki S."/>
            <person name="Gariboldi M."/>
            <person name="Georgii-Hemming P."/>
            <person name="Gingeras T.R."/>
            <person name="Gojobori T."/>
            <person name="Green R.E."/>
            <person name="Gustincich S."/>
            <person name="Harbers M."/>
            <person name="Hayashi Y."/>
            <person name="Hensch T.K."/>
            <person name="Hirokawa N."/>
            <person name="Hill D."/>
            <person name="Huminiecki L."/>
            <person name="Iacono M."/>
            <person name="Ikeo K."/>
            <person name="Iwama A."/>
            <person name="Ishikawa T."/>
            <person name="Jakt M."/>
            <person name="Kanapin A."/>
            <person name="Katoh M."/>
            <person name="Kawasawa Y."/>
            <person name="Kelso J."/>
            <person name="Kitamura H."/>
            <person name="Kitano H."/>
            <person name="Kollias G."/>
            <person name="Krishnan S.P."/>
            <person name="Kruger A."/>
            <person name="Kummerfeld S.K."/>
            <person name="Kurochkin I.V."/>
            <person name="Lareau L.F."/>
            <person name="Lazarevic D."/>
            <person name="Lipovich L."/>
            <person name="Liu J."/>
            <person name="Liuni S."/>
            <person name="McWilliam S."/>
            <person name="Madan Babu M."/>
            <person name="Madera M."/>
            <person name="Marchionni L."/>
            <person name="Matsuda H."/>
            <person name="Matsuzawa S."/>
            <person name="Miki H."/>
            <person name="Mignone F."/>
            <person name="Miyake S."/>
            <person name="Morris K."/>
            <person name="Mottagui-Tabar S."/>
            <person name="Mulder N."/>
            <person name="Nakano N."/>
            <person name="Nakauchi H."/>
            <person name="Ng P."/>
            <person name="Nilsson R."/>
            <person name="Nishiguchi S."/>
            <person name="Nishikawa S."/>
            <person name="Nori F."/>
            <person name="Ohara O."/>
            <person name="Okazaki Y."/>
            <person name="Orlando V."/>
            <person name="Pang K.C."/>
            <person name="Pavan W.J."/>
            <person name="Pavesi G."/>
            <person name="Pesole G."/>
            <person name="Petrovsky N."/>
            <person name="Piazza S."/>
            <person name="Reed J."/>
            <person name="Reid J.F."/>
            <person name="Ring B.Z."/>
            <person name="Ringwald M."/>
            <person name="Rost B."/>
            <person name="Ruan Y."/>
            <person name="Salzberg S.L."/>
            <person name="Sandelin A."/>
            <person name="Schneider C."/>
            <person name="Schoenbach C."/>
            <person name="Sekiguchi K."/>
            <person name="Semple C.A."/>
            <person name="Seno S."/>
            <person name="Sessa L."/>
            <person name="Sheng Y."/>
            <person name="Shibata Y."/>
            <person name="Shimada H."/>
            <person name="Shimada K."/>
            <person name="Silva D."/>
            <person name="Sinclair B."/>
            <person name="Sperling S."/>
            <person name="Stupka E."/>
            <person name="Sugiura K."/>
            <person name="Sultana R."/>
            <person name="Takenaka Y."/>
            <person name="Taki K."/>
            <person name="Tammoja K."/>
            <person name="Tan S.L."/>
            <person name="Tang S."/>
            <person name="Taylor M.S."/>
            <person name="Tegner J."/>
            <person name="Teichmann S.A."/>
            <person name="Ueda H.R."/>
            <person name="van Nimwegen E."/>
            <person name="Verardo R."/>
            <person name="Wei C.L."/>
            <person name="Yagi K."/>
            <person name="Yamanishi H."/>
            <person name="Zabarovsky E."/>
            <person name="Zhu S."/>
            <person name="Zimmer A."/>
            <person name="Hide W."/>
            <person name="Bult C."/>
            <person name="Grimmond S.M."/>
            <person name="Teasdale R.D."/>
            <person name="Liu E.T."/>
            <person name="Brusic V."/>
            <person name="Quackenbush J."/>
            <person name="Wahlestedt C."/>
            <person name="Mattick J.S."/>
            <person name="Hume D.A."/>
            <person name="Kai C."/>
            <person name="Sasaki D."/>
            <person name="Tomaru Y."/>
            <person name="Fukuda S."/>
            <person name="Kanamori-Katayama M."/>
            <person name="Suzuki M."/>
            <person name="Aoki J."/>
            <person name="Arakawa T."/>
            <person name="Iida J."/>
            <person name="Imamura K."/>
            <person name="Itoh M."/>
            <person name="Kato T."/>
            <person name="Kawaji H."/>
            <person name="Kawagashira N."/>
            <person name="Kawashima T."/>
            <person name="Kojima M."/>
            <person name="Kondo S."/>
            <person name="Konno H."/>
            <person name="Nakano K."/>
            <person name="Ninomiya N."/>
            <person name="Nishio T."/>
            <person name="Okada M."/>
            <person name="Plessy C."/>
            <person name="Shibata K."/>
            <person name="Shiraki T."/>
            <person name="Suzuki S."/>
            <person name="Tagami M."/>
            <person name="Waki K."/>
            <person name="Watahiki A."/>
            <person name="Okamura-Oho Y."/>
            <person name="Suzuki H."/>
            <person name="Kawai J."/>
            <person name="Hayashizaki Y."/>
        </authorList>
    </citation>
    <scope>NUCLEOTIDE SEQUENCE [LARGE SCALE MRNA] (ISOFORM 2)</scope>
    <source>
        <strain>C57BL/6J</strain>
    </source>
</reference>
<reference key="2">
    <citation type="journal article" date="2009" name="PLoS Biol.">
        <title>Lineage-specific biology revealed by a finished genome assembly of the mouse.</title>
        <authorList>
            <person name="Church D.M."/>
            <person name="Goodstadt L."/>
            <person name="Hillier L.W."/>
            <person name="Zody M.C."/>
            <person name="Goldstein S."/>
            <person name="She X."/>
            <person name="Bult C.J."/>
            <person name="Agarwala R."/>
            <person name="Cherry J.L."/>
            <person name="DiCuccio M."/>
            <person name="Hlavina W."/>
            <person name="Kapustin Y."/>
            <person name="Meric P."/>
            <person name="Maglott D."/>
            <person name="Birtle Z."/>
            <person name="Marques A.C."/>
            <person name="Graves T."/>
            <person name="Zhou S."/>
            <person name="Teague B."/>
            <person name="Potamousis K."/>
            <person name="Churas C."/>
            <person name="Place M."/>
            <person name="Herschleb J."/>
            <person name="Runnheim R."/>
            <person name="Forrest D."/>
            <person name="Amos-Landgraf J."/>
            <person name="Schwartz D.C."/>
            <person name="Cheng Z."/>
            <person name="Lindblad-Toh K."/>
            <person name="Eichler E.E."/>
            <person name="Ponting C.P."/>
        </authorList>
    </citation>
    <scope>NUCLEOTIDE SEQUENCE [LARGE SCALE GENOMIC DNA]</scope>
    <source>
        <strain>C57BL/6J</strain>
    </source>
</reference>
<reference key="3">
    <citation type="submission" date="2005-09" db="EMBL/GenBank/DDBJ databases">
        <authorList>
            <person name="Mural R.J."/>
            <person name="Adams M.D."/>
            <person name="Myers E.W."/>
            <person name="Smith H.O."/>
            <person name="Venter J.C."/>
        </authorList>
    </citation>
    <scope>NUCLEOTIDE SEQUENCE [LARGE SCALE GENOMIC DNA]</scope>
</reference>
<reference key="4">
    <citation type="journal article" date="2004" name="Genome Res.">
        <title>The status, quality, and expansion of the NIH full-length cDNA project: the Mammalian Gene Collection (MGC).</title>
        <authorList>
            <consortium name="The MGC Project Team"/>
        </authorList>
    </citation>
    <scope>NUCLEOTIDE SEQUENCE [LARGE SCALE MRNA] (ISOFORM 1)</scope>
    <source>
        <tissue>Brain</tissue>
    </source>
</reference>
<reference key="5">
    <citation type="journal article" date="2010" name="Cell">
        <title>A tissue-specific atlas of mouse protein phosphorylation and expression.</title>
        <authorList>
            <person name="Huttlin E.L."/>
            <person name="Jedrychowski M.P."/>
            <person name="Elias J.E."/>
            <person name="Goswami T."/>
            <person name="Rad R."/>
            <person name="Beausoleil S.A."/>
            <person name="Villen J."/>
            <person name="Haas W."/>
            <person name="Sowa M.E."/>
            <person name="Gygi S.P."/>
        </authorList>
    </citation>
    <scope>IDENTIFICATION BY MASS SPECTROMETRY [LARGE SCALE ANALYSIS]</scope>
    <source>
        <tissue>Lung</tissue>
        <tissue>Testis</tissue>
    </source>
</reference>
<accession>Q3UHH8</accession>
<accession>B7ZWC3</accession>
<protein>
    <recommendedName>
        <fullName>Glucoside xylosyltransferase 1</fullName>
        <ecNumber evidence="1">2.4.2.42</ecNumber>
    </recommendedName>
    <alternativeName>
        <fullName>Glycosyltransferase 8 domain-containing protein 3</fullName>
    </alternativeName>
</protein>